<accession>A1V7Z5</accession>
<organism>
    <name type="scientific">Burkholderia mallei (strain SAVP1)</name>
    <dbReference type="NCBI Taxonomy" id="320388"/>
    <lineage>
        <taxon>Bacteria</taxon>
        <taxon>Pseudomonadati</taxon>
        <taxon>Pseudomonadota</taxon>
        <taxon>Betaproteobacteria</taxon>
        <taxon>Burkholderiales</taxon>
        <taxon>Burkholderiaceae</taxon>
        <taxon>Burkholderia</taxon>
        <taxon>pseudomallei group</taxon>
    </lineage>
</organism>
<name>TTCA_BURMS</name>
<protein>
    <recommendedName>
        <fullName evidence="1">tRNA-cytidine(32) 2-sulfurtransferase</fullName>
        <ecNumber evidence="1">2.8.1.-</ecNumber>
    </recommendedName>
    <alternativeName>
        <fullName evidence="1">Two-thiocytidine biosynthesis protein A</fullName>
    </alternativeName>
    <alternativeName>
        <fullName evidence="1">tRNA 2-thiocytidine biosynthesis protein TtcA</fullName>
    </alternativeName>
</protein>
<evidence type="ECO:0000255" key="1">
    <source>
        <dbReference type="HAMAP-Rule" id="MF_01850"/>
    </source>
</evidence>
<sequence length="331" mass="36719">MNAPHTPHLNEAEAAAAVEANAAELGRRALTRREQKEAYENNKLFKRLVRQVGQAIGDYNMIEHGDKVMVCLSGGKDSYALLDILLRLRERAPIDFDIVAVNLDQKQPGFPEHVLPEYLTKIGVPFHIENQDTYSIVKRLVPEGKTTCSLCSRLRRGILYRVAGELGATKIALGHHRDDIVQTLLLNMFYGGKLKGMPPKLQSDDGKNIVIRPLAYAKETDLEKYAELREFPIIPCNLCGSQPNLKRAEMKALIRDWDKRFPGRVDNMFNALANVVPSHLMDARLFPFAGLRATGEADPNGDIAFDEDPCGTDASAPGGAKSVSIVQFDDL</sequence>
<dbReference type="EC" id="2.8.1.-" evidence="1"/>
<dbReference type="EMBL" id="CP000526">
    <property type="protein sequence ID" value="ABM49858.1"/>
    <property type="molecule type" value="Genomic_DNA"/>
</dbReference>
<dbReference type="RefSeq" id="WP_004189298.1">
    <property type="nucleotide sequence ID" value="NC_008785.1"/>
</dbReference>
<dbReference type="SMR" id="A1V7Z5"/>
<dbReference type="GeneID" id="93058831"/>
<dbReference type="KEGG" id="bmv:BMASAVP1_A3054"/>
<dbReference type="HOGENOM" id="CLU_026481_0_0_4"/>
<dbReference type="GO" id="GO:0005737">
    <property type="term" value="C:cytoplasm"/>
    <property type="evidence" value="ECO:0007669"/>
    <property type="project" value="UniProtKB-SubCell"/>
</dbReference>
<dbReference type="GO" id="GO:0051539">
    <property type="term" value="F:4 iron, 4 sulfur cluster binding"/>
    <property type="evidence" value="ECO:0007669"/>
    <property type="project" value="UniProtKB-UniRule"/>
</dbReference>
<dbReference type="GO" id="GO:0005524">
    <property type="term" value="F:ATP binding"/>
    <property type="evidence" value="ECO:0007669"/>
    <property type="project" value="UniProtKB-UniRule"/>
</dbReference>
<dbReference type="GO" id="GO:0000287">
    <property type="term" value="F:magnesium ion binding"/>
    <property type="evidence" value="ECO:0007669"/>
    <property type="project" value="UniProtKB-UniRule"/>
</dbReference>
<dbReference type="GO" id="GO:0016783">
    <property type="term" value="F:sulfurtransferase activity"/>
    <property type="evidence" value="ECO:0007669"/>
    <property type="project" value="UniProtKB-UniRule"/>
</dbReference>
<dbReference type="GO" id="GO:0000049">
    <property type="term" value="F:tRNA binding"/>
    <property type="evidence" value="ECO:0007669"/>
    <property type="project" value="UniProtKB-KW"/>
</dbReference>
<dbReference type="GO" id="GO:0034227">
    <property type="term" value="P:tRNA thio-modification"/>
    <property type="evidence" value="ECO:0007669"/>
    <property type="project" value="UniProtKB-UniRule"/>
</dbReference>
<dbReference type="CDD" id="cd24138">
    <property type="entry name" value="TtcA-like"/>
    <property type="match status" value="1"/>
</dbReference>
<dbReference type="Gene3D" id="3.40.50.620">
    <property type="entry name" value="HUPs"/>
    <property type="match status" value="1"/>
</dbReference>
<dbReference type="HAMAP" id="MF_01850">
    <property type="entry name" value="TtcA"/>
    <property type="match status" value="1"/>
</dbReference>
<dbReference type="InterPro" id="IPR014729">
    <property type="entry name" value="Rossmann-like_a/b/a_fold"/>
</dbReference>
<dbReference type="InterPro" id="IPR011063">
    <property type="entry name" value="TilS/TtcA_N"/>
</dbReference>
<dbReference type="InterPro" id="IPR012089">
    <property type="entry name" value="tRNA_Cyd_32_2_STrfase"/>
</dbReference>
<dbReference type="NCBIfam" id="NF007972">
    <property type="entry name" value="PRK10696.1"/>
    <property type="match status" value="1"/>
</dbReference>
<dbReference type="PANTHER" id="PTHR43686:SF1">
    <property type="entry name" value="AMINOTRAN_5 DOMAIN-CONTAINING PROTEIN"/>
    <property type="match status" value="1"/>
</dbReference>
<dbReference type="PANTHER" id="PTHR43686">
    <property type="entry name" value="SULFURTRANSFERASE-RELATED"/>
    <property type="match status" value="1"/>
</dbReference>
<dbReference type="Pfam" id="PF01171">
    <property type="entry name" value="ATP_bind_3"/>
    <property type="match status" value="1"/>
</dbReference>
<dbReference type="SUPFAM" id="SSF52402">
    <property type="entry name" value="Adenine nucleotide alpha hydrolases-like"/>
    <property type="match status" value="1"/>
</dbReference>
<reference key="1">
    <citation type="journal article" date="2010" name="Genome Biol. Evol.">
        <title>Continuing evolution of Burkholderia mallei through genome reduction and large-scale rearrangements.</title>
        <authorList>
            <person name="Losada L."/>
            <person name="Ronning C.M."/>
            <person name="DeShazer D."/>
            <person name="Woods D."/>
            <person name="Fedorova N."/>
            <person name="Kim H.S."/>
            <person name="Shabalina S.A."/>
            <person name="Pearson T.R."/>
            <person name="Brinkac L."/>
            <person name="Tan P."/>
            <person name="Nandi T."/>
            <person name="Crabtree J."/>
            <person name="Badger J."/>
            <person name="Beckstrom-Sternberg S."/>
            <person name="Saqib M."/>
            <person name="Schutzer S.E."/>
            <person name="Keim P."/>
            <person name="Nierman W.C."/>
        </authorList>
    </citation>
    <scope>NUCLEOTIDE SEQUENCE [LARGE SCALE GENOMIC DNA]</scope>
    <source>
        <strain>SAVP1</strain>
    </source>
</reference>
<proteinExistence type="inferred from homology"/>
<keyword id="KW-0004">4Fe-4S</keyword>
<keyword id="KW-0067">ATP-binding</keyword>
<keyword id="KW-0963">Cytoplasm</keyword>
<keyword id="KW-0408">Iron</keyword>
<keyword id="KW-0411">Iron-sulfur</keyword>
<keyword id="KW-0460">Magnesium</keyword>
<keyword id="KW-0479">Metal-binding</keyword>
<keyword id="KW-0547">Nucleotide-binding</keyword>
<keyword id="KW-0694">RNA-binding</keyword>
<keyword id="KW-0808">Transferase</keyword>
<keyword id="KW-0819">tRNA processing</keyword>
<keyword id="KW-0820">tRNA-binding</keyword>
<feature type="chain" id="PRO_0000348687" description="tRNA-cytidine(32) 2-sulfurtransferase">
    <location>
        <begin position="1"/>
        <end position="331"/>
    </location>
</feature>
<feature type="short sequence motif" description="PP-loop motif" evidence="1">
    <location>
        <begin position="73"/>
        <end position="78"/>
    </location>
</feature>
<feature type="binding site" evidence="1">
    <location>
        <position position="148"/>
    </location>
    <ligand>
        <name>[4Fe-4S] cluster</name>
        <dbReference type="ChEBI" id="CHEBI:49883"/>
    </ligand>
</feature>
<feature type="binding site" evidence="1">
    <location>
        <position position="151"/>
    </location>
    <ligand>
        <name>[4Fe-4S] cluster</name>
        <dbReference type="ChEBI" id="CHEBI:49883"/>
    </ligand>
</feature>
<feature type="binding site" evidence="1">
    <location>
        <position position="239"/>
    </location>
    <ligand>
        <name>[4Fe-4S] cluster</name>
        <dbReference type="ChEBI" id="CHEBI:49883"/>
    </ligand>
</feature>
<comment type="function">
    <text evidence="1">Catalyzes the ATP-dependent 2-thiolation of cytidine in position 32 of tRNA, to form 2-thiocytidine (s(2)C32). The sulfur atoms are provided by the cysteine/cysteine desulfurase (IscS) system.</text>
</comment>
<comment type="catalytic activity">
    <reaction evidence="1">
        <text>cytidine(32) in tRNA + S-sulfanyl-L-cysteinyl-[cysteine desulfurase] + AH2 + ATP = 2-thiocytidine(32) in tRNA + L-cysteinyl-[cysteine desulfurase] + A + AMP + diphosphate + H(+)</text>
        <dbReference type="Rhea" id="RHEA:57048"/>
        <dbReference type="Rhea" id="RHEA-COMP:10288"/>
        <dbReference type="Rhea" id="RHEA-COMP:12157"/>
        <dbReference type="Rhea" id="RHEA-COMP:12158"/>
        <dbReference type="Rhea" id="RHEA-COMP:14821"/>
        <dbReference type="ChEBI" id="CHEBI:13193"/>
        <dbReference type="ChEBI" id="CHEBI:15378"/>
        <dbReference type="ChEBI" id="CHEBI:17499"/>
        <dbReference type="ChEBI" id="CHEBI:29950"/>
        <dbReference type="ChEBI" id="CHEBI:30616"/>
        <dbReference type="ChEBI" id="CHEBI:33019"/>
        <dbReference type="ChEBI" id="CHEBI:61963"/>
        <dbReference type="ChEBI" id="CHEBI:82748"/>
        <dbReference type="ChEBI" id="CHEBI:141453"/>
        <dbReference type="ChEBI" id="CHEBI:456215"/>
    </reaction>
    <physiologicalReaction direction="left-to-right" evidence="1">
        <dbReference type="Rhea" id="RHEA:57049"/>
    </physiologicalReaction>
</comment>
<comment type="cofactor">
    <cofactor evidence="1">
        <name>Mg(2+)</name>
        <dbReference type="ChEBI" id="CHEBI:18420"/>
    </cofactor>
</comment>
<comment type="cofactor">
    <cofactor evidence="1">
        <name>[4Fe-4S] cluster</name>
        <dbReference type="ChEBI" id="CHEBI:49883"/>
    </cofactor>
    <text evidence="1">Binds 1 [4Fe-4S] cluster per subunit. The cluster is chelated by three Cys residues, the fourth Fe has a free coordination site that may bind a sulfur atom transferred from the persulfide of IscS.</text>
</comment>
<comment type="pathway">
    <text evidence="1">tRNA modification.</text>
</comment>
<comment type="subunit">
    <text evidence="1">Homodimer.</text>
</comment>
<comment type="subcellular location">
    <subcellularLocation>
        <location evidence="1">Cytoplasm</location>
    </subcellularLocation>
</comment>
<comment type="miscellaneous">
    <text evidence="1">The thiolation reaction likely consists of two steps: a first activation step by ATP to form an adenylated intermediate of the target base of tRNA, and a second nucleophilic substitution step of the sulfur (S) atom supplied by the hydrosulfide attached to the Fe-S cluster.</text>
</comment>
<comment type="similarity">
    <text evidence="1">Belongs to the TtcA family.</text>
</comment>
<gene>
    <name evidence="1" type="primary">ttcA</name>
    <name type="ordered locus">BMASAVP1_A3054</name>
</gene>